<organism>
    <name type="scientific">Prochlorococcus marinus (strain NATL1A)</name>
    <dbReference type="NCBI Taxonomy" id="167555"/>
    <lineage>
        <taxon>Bacteria</taxon>
        <taxon>Bacillati</taxon>
        <taxon>Cyanobacteriota</taxon>
        <taxon>Cyanophyceae</taxon>
        <taxon>Synechococcales</taxon>
        <taxon>Prochlorococcaceae</taxon>
        <taxon>Prochlorococcus</taxon>
    </lineage>
</organism>
<protein>
    <recommendedName>
        <fullName evidence="1">Polyribonucleotide nucleotidyltransferase</fullName>
        <ecNumber evidence="1">2.7.7.8</ecNumber>
    </recommendedName>
    <alternativeName>
        <fullName evidence="1">Polynucleotide phosphorylase</fullName>
        <shortName evidence="1">PNPase</shortName>
    </alternativeName>
</protein>
<accession>A2C412</accession>
<dbReference type="EC" id="2.7.7.8" evidence="1"/>
<dbReference type="EMBL" id="CP000553">
    <property type="protein sequence ID" value="ABM76222.1"/>
    <property type="molecule type" value="Genomic_DNA"/>
</dbReference>
<dbReference type="RefSeq" id="WP_011824227.1">
    <property type="nucleotide sequence ID" value="NC_008819.1"/>
</dbReference>
<dbReference type="SMR" id="A2C412"/>
<dbReference type="KEGG" id="pme:NATL1_16651"/>
<dbReference type="eggNOG" id="COG1185">
    <property type="taxonomic scope" value="Bacteria"/>
</dbReference>
<dbReference type="HOGENOM" id="CLU_004217_2_2_3"/>
<dbReference type="Proteomes" id="UP000002592">
    <property type="component" value="Chromosome"/>
</dbReference>
<dbReference type="GO" id="GO:0005829">
    <property type="term" value="C:cytosol"/>
    <property type="evidence" value="ECO:0007669"/>
    <property type="project" value="TreeGrafter"/>
</dbReference>
<dbReference type="GO" id="GO:0000175">
    <property type="term" value="F:3'-5'-RNA exonuclease activity"/>
    <property type="evidence" value="ECO:0007669"/>
    <property type="project" value="TreeGrafter"/>
</dbReference>
<dbReference type="GO" id="GO:0000287">
    <property type="term" value="F:magnesium ion binding"/>
    <property type="evidence" value="ECO:0007669"/>
    <property type="project" value="UniProtKB-UniRule"/>
</dbReference>
<dbReference type="GO" id="GO:0004654">
    <property type="term" value="F:polyribonucleotide nucleotidyltransferase activity"/>
    <property type="evidence" value="ECO:0007669"/>
    <property type="project" value="UniProtKB-UniRule"/>
</dbReference>
<dbReference type="GO" id="GO:0003723">
    <property type="term" value="F:RNA binding"/>
    <property type="evidence" value="ECO:0007669"/>
    <property type="project" value="UniProtKB-UniRule"/>
</dbReference>
<dbReference type="GO" id="GO:0006402">
    <property type="term" value="P:mRNA catabolic process"/>
    <property type="evidence" value="ECO:0007669"/>
    <property type="project" value="UniProtKB-UniRule"/>
</dbReference>
<dbReference type="GO" id="GO:0006396">
    <property type="term" value="P:RNA processing"/>
    <property type="evidence" value="ECO:0007669"/>
    <property type="project" value="InterPro"/>
</dbReference>
<dbReference type="CDD" id="cd02393">
    <property type="entry name" value="KH-I_PNPase"/>
    <property type="match status" value="1"/>
</dbReference>
<dbReference type="CDD" id="cd11363">
    <property type="entry name" value="RNase_PH_PNPase_1"/>
    <property type="match status" value="1"/>
</dbReference>
<dbReference type="CDD" id="cd11364">
    <property type="entry name" value="RNase_PH_PNPase_2"/>
    <property type="match status" value="1"/>
</dbReference>
<dbReference type="FunFam" id="2.40.50.140:FF:000023">
    <property type="entry name" value="Polyribonucleotide nucleotidyltransferase"/>
    <property type="match status" value="1"/>
</dbReference>
<dbReference type="FunFam" id="3.30.1370.10:FF:000001">
    <property type="entry name" value="Polyribonucleotide nucleotidyltransferase"/>
    <property type="match status" value="1"/>
</dbReference>
<dbReference type="FunFam" id="3.30.230.70:FF:000001">
    <property type="entry name" value="Polyribonucleotide nucleotidyltransferase"/>
    <property type="match status" value="1"/>
</dbReference>
<dbReference type="FunFam" id="3.30.230.70:FF:000002">
    <property type="entry name" value="Polyribonucleotide nucleotidyltransferase"/>
    <property type="match status" value="1"/>
</dbReference>
<dbReference type="Gene3D" id="3.30.230.70">
    <property type="entry name" value="GHMP Kinase, N-terminal domain"/>
    <property type="match status" value="2"/>
</dbReference>
<dbReference type="Gene3D" id="3.30.1370.10">
    <property type="entry name" value="K Homology domain, type 1"/>
    <property type="match status" value="1"/>
</dbReference>
<dbReference type="Gene3D" id="2.40.50.140">
    <property type="entry name" value="Nucleic acid-binding proteins"/>
    <property type="match status" value="1"/>
</dbReference>
<dbReference type="HAMAP" id="MF_01595">
    <property type="entry name" value="PNPase"/>
    <property type="match status" value="1"/>
</dbReference>
<dbReference type="InterPro" id="IPR001247">
    <property type="entry name" value="ExoRNase_PH_dom1"/>
</dbReference>
<dbReference type="InterPro" id="IPR015847">
    <property type="entry name" value="ExoRNase_PH_dom2"/>
</dbReference>
<dbReference type="InterPro" id="IPR036345">
    <property type="entry name" value="ExoRNase_PH_dom2_sf"/>
</dbReference>
<dbReference type="InterPro" id="IPR004087">
    <property type="entry name" value="KH_dom"/>
</dbReference>
<dbReference type="InterPro" id="IPR004088">
    <property type="entry name" value="KH_dom_type_1"/>
</dbReference>
<dbReference type="InterPro" id="IPR036612">
    <property type="entry name" value="KH_dom_type_1_sf"/>
</dbReference>
<dbReference type="InterPro" id="IPR012340">
    <property type="entry name" value="NA-bd_OB-fold"/>
</dbReference>
<dbReference type="InterPro" id="IPR012162">
    <property type="entry name" value="PNPase"/>
</dbReference>
<dbReference type="InterPro" id="IPR027408">
    <property type="entry name" value="PNPase/RNase_PH_dom_sf"/>
</dbReference>
<dbReference type="InterPro" id="IPR015848">
    <property type="entry name" value="PNPase_PH_RNA-bd_bac/org-type"/>
</dbReference>
<dbReference type="InterPro" id="IPR036456">
    <property type="entry name" value="PNPase_PH_RNA-bd_sf"/>
</dbReference>
<dbReference type="InterPro" id="IPR020568">
    <property type="entry name" value="Ribosomal_Su5_D2-typ_SF"/>
</dbReference>
<dbReference type="InterPro" id="IPR003029">
    <property type="entry name" value="S1_domain"/>
</dbReference>
<dbReference type="NCBIfam" id="TIGR03591">
    <property type="entry name" value="polynuc_phos"/>
    <property type="match status" value="1"/>
</dbReference>
<dbReference type="NCBIfam" id="NF008805">
    <property type="entry name" value="PRK11824.1"/>
    <property type="match status" value="1"/>
</dbReference>
<dbReference type="PANTHER" id="PTHR11252">
    <property type="entry name" value="POLYRIBONUCLEOTIDE NUCLEOTIDYLTRANSFERASE"/>
    <property type="match status" value="1"/>
</dbReference>
<dbReference type="PANTHER" id="PTHR11252:SF0">
    <property type="entry name" value="POLYRIBONUCLEOTIDE NUCLEOTIDYLTRANSFERASE 1, MITOCHONDRIAL"/>
    <property type="match status" value="1"/>
</dbReference>
<dbReference type="Pfam" id="PF00013">
    <property type="entry name" value="KH_1"/>
    <property type="match status" value="1"/>
</dbReference>
<dbReference type="Pfam" id="PF03726">
    <property type="entry name" value="PNPase"/>
    <property type="match status" value="1"/>
</dbReference>
<dbReference type="Pfam" id="PF01138">
    <property type="entry name" value="RNase_PH"/>
    <property type="match status" value="2"/>
</dbReference>
<dbReference type="Pfam" id="PF03725">
    <property type="entry name" value="RNase_PH_C"/>
    <property type="match status" value="1"/>
</dbReference>
<dbReference type="Pfam" id="PF00575">
    <property type="entry name" value="S1"/>
    <property type="match status" value="1"/>
</dbReference>
<dbReference type="PIRSF" id="PIRSF005499">
    <property type="entry name" value="PNPase"/>
    <property type="match status" value="1"/>
</dbReference>
<dbReference type="SMART" id="SM00322">
    <property type="entry name" value="KH"/>
    <property type="match status" value="1"/>
</dbReference>
<dbReference type="SMART" id="SM00316">
    <property type="entry name" value="S1"/>
    <property type="match status" value="1"/>
</dbReference>
<dbReference type="SUPFAM" id="SSF54791">
    <property type="entry name" value="Eukaryotic type KH-domain (KH-domain type I)"/>
    <property type="match status" value="1"/>
</dbReference>
<dbReference type="SUPFAM" id="SSF50249">
    <property type="entry name" value="Nucleic acid-binding proteins"/>
    <property type="match status" value="1"/>
</dbReference>
<dbReference type="SUPFAM" id="SSF46915">
    <property type="entry name" value="Polynucleotide phosphorylase/guanosine pentaphosphate synthase (PNPase/GPSI), domain 3"/>
    <property type="match status" value="1"/>
</dbReference>
<dbReference type="SUPFAM" id="SSF55666">
    <property type="entry name" value="Ribonuclease PH domain 2-like"/>
    <property type="match status" value="2"/>
</dbReference>
<dbReference type="SUPFAM" id="SSF54211">
    <property type="entry name" value="Ribosomal protein S5 domain 2-like"/>
    <property type="match status" value="2"/>
</dbReference>
<dbReference type="PROSITE" id="PS50084">
    <property type="entry name" value="KH_TYPE_1"/>
    <property type="match status" value="1"/>
</dbReference>
<dbReference type="PROSITE" id="PS50126">
    <property type="entry name" value="S1"/>
    <property type="match status" value="1"/>
</dbReference>
<feature type="chain" id="PRO_0000329771" description="Polyribonucleotide nucleotidyltransferase">
    <location>
        <begin position="1"/>
        <end position="722"/>
    </location>
</feature>
<feature type="domain" description="KH" evidence="1">
    <location>
        <begin position="562"/>
        <end position="621"/>
    </location>
</feature>
<feature type="domain" description="S1 motif" evidence="1">
    <location>
        <begin position="631"/>
        <end position="699"/>
    </location>
</feature>
<feature type="region of interest" description="Disordered" evidence="2">
    <location>
        <begin position="700"/>
        <end position="722"/>
    </location>
</feature>
<feature type="compositionally biased region" description="Pro residues" evidence="2">
    <location>
        <begin position="712"/>
        <end position="722"/>
    </location>
</feature>
<feature type="binding site" evidence="1">
    <location>
        <position position="495"/>
    </location>
    <ligand>
        <name>Mg(2+)</name>
        <dbReference type="ChEBI" id="CHEBI:18420"/>
    </ligand>
</feature>
<feature type="binding site" evidence="1">
    <location>
        <position position="501"/>
    </location>
    <ligand>
        <name>Mg(2+)</name>
        <dbReference type="ChEBI" id="CHEBI:18420"/>
    </ligand>
</feature>
<proteinExistence type="inferred from homology"/>
<evidence type="ECO:0000255" key="1">
    <source>
        <dbReference type="HAMAP-Rule" id="MF_01595"/>
    </source>
</evidence>
<evidence type="ECO:0000256" key="2">
    <source>
        <dbReference type="SAM" id="MobiDB-lite"/>
    </source>
</evidence>
<gene>
    <name evidence="1" type="primary">pnp</name>
    <name type="ordered locus">NATL1_16651</name>
</gene>
<sequence>MQGQTKSVSFDGREIKLTTGRFAPQAGGSVMIECGDTSVLVTATKSSGREGVDFLPLMCDYEERLYAAGRIPGSFMRREGRPPERATLISRLIDRPMRPLFPGWMRDDIQIVATCLSLDERVPADVLAVTGASMATLMAGIPFQGPMAAVRVGLLGDDFVLNPSYREIERGDLDLVVAGTPDGVVMVEAGANQLSEQDVIEAIDFGYEAITELINAQKEVLKESGIKQEMPKAPEIDDTISTYLDKNCTKSISEVLKNFDQTKEERDNKIEEIKISISAKIDGLKDDNAVKKSLSLNNKLLENSYKALTKKLMREQIIKEGKRVDGRELNEVRAIEADAAVLPNRVHGSALFQRGLTQVLSTATLGTPSDAQEMDDLNPNTDKTYIHHYNFPPYSVGETRPMRTPGRREVGHGALAERALIPVLPAKDTFPYVLRVVSEVLSSNGSTSMASVCGSTLALMDAGVPLKAPVGGAAMGLIKEGKEVRILTDIQGIEDFLGDMDFKVAGTEKGITALQMDMKITGLPIETIGEAINQALPARTHILGKMLDAIETPKDNLSPHAPRLLSFRIDPELIGTVIGPGGRTIKGITERTNTKIDIEDGGIVTIASHDGAAAEEAQRIIEGLTRKVHEGEIFPGSITRIIPIGAFVEILPGKEGMIHISQLSEARVEKVEDVVKVGDQVTVRVREIDNRGRINLTLRGVSQNGGMSNYPEPTPTPVAPLT</sequence>
<name>PNP_PROM1</name>
<keyword id="KW-0963">Cytoplasm</keyword>
<keyword id="KW-0460">Magnesium</keyword>
<keyword id="KW-0479">Metal-binding</keyword>
<keyword id="KW-0548">Nucleotidyltransferase</keyword>
<keyword id="KW-0694">RNA-binding</keyword>
<keyword id="KW-0808">Transferase</keyword>
<comment type="function">
    <text evidence="1">Involved in mRNA degradation. Catalyzes the phosphorolysis of single-stranded polyribonucleotides processively in the 3'- to 5'-direction.</text>
</comment>
<comment type="catalytic activity">
    <reaction evidence="1">
        <text>RNA(n+1) + phosphate = RNA(n) + a ribonucleoside 5'-diphosphate</text>
        <dbReference type="Rhea" id="RHEA:22096"/>
        <dbReference type="Rhea" id="RHEA-COMP:14527"/>
        <dbReference type="Rhea" id="RHEA-COMP:17342"/>
        <dbReference type="ChEBI" id="CHEBI:43474"/>
        <dbReference type="ChEBI" id="CHEBI:57930"/>
        <dbReference type="ChEBI" id="CHEBI:140395"/>
        <dbReference type="EC" id="2.7.7.8"/>
    </reaction>
</comment>
<comment type="cofactor">
    <cofactor evidence="1">
        <name>Mg(2+)</name>
        <dbReference type="ChEBI" id="CHEBI:18420"/>
    </cofactor>
</comment>
<comment type="subcellular location">
    <subcellularLocation>
        <location evidence="1">Cytoplasm</location>
    </subcellularLocation>
</comment>
<comment type="similarity">
    <text evidence="1">Belongs to the polyribonucleotide nucleotidyltransferase family.</text>
</comment>
<reference key="1">
    <citation type="journal article" date="2007" name="PLoS Genet.">
        <title>Patterns and implications of gene gain and loss in the evolution of Prochlorococcus.</title>
        <authorList>
            <person name="Kettler G.C."/>
            <person name="Martiny A.C."/>
            <person name="Huang K."/>
            <person name="Zucker J."/>
            <person name="Coleman M.L."/>
            <person name="Rodrigue S."/>
            <person name="Chen F."/>
            <person name="Lapidus A."/>
            <person name="Ferriera S."/>
            <person name="Johnson J."/>
            <person name="Steglich C."/>
            <person name="Church G.M."/>
            <person name="Richardson P."/>
            <person name="Chisholm S.W."/>
        </authorList>
    </citation>
    <scope>NUCLEOTIDE SEQUENCE [LARGE SCALE GENOMIC DNA]</scope>
    <source>
        <strain>NATL1A</strain>
    </source>
</reference>